<accession>Q88WT1</accession>
<accession>F9UNR9</accession>
<keyword id="KW-0067">ATP-binding</keyword>
<keyword id="KW-0963">Cytoplasm</keyword>
<keyword id="KW-0436">Ligase</keyword>
<keyword id="KW-0547">Nucleotide-binding</keyword>
<keyword id="KW-1185">Reference proteome</keyword>
<keyword id="KW-0694">RNA-binding</keyword>
<keyword id="KW-0819">tRNA processing</keyword>
<keyword id="KW-0820">tRNA-binding</keyword>
<gene>
    <name evidence="1" type="primary">tmcAL</name>
    <name type="ordered locus">lp_1534</name>
</gene>
<proteinExistence type="inferred from homology"/>
<feature type="chain" id="PRO_0000147170" description="tRNA(Met) cytidine acetate ligase">
    <location>
        <begin position="1"/>
        <end position="383"/>
    </location>
</feature>
<feature type="binding site" evidence="1">
    <location>
        <begin position="7"/>
        <end position="20"/>
    </location>
    <ligand>
        <name>ATP</name>
        <dbReference type="ChEBI" id="CHEBI:30616"/>
    </ligand>
</feature>
<feature type="binding site" evidence="1">
    <location>
        <position position="101"/>
    </location>
    <ligand>
        <name>ATP</name>
        <dbReference type="ChEBI" id="CHEBI:30616"/>
    </ligand>
</feature>
<feature type="binding site" evidence="1">
    <location>
        <position position="150"/>
    </location>
    <ligand>
        <name>ATP</name>
        <dbReference type="ChEBI" id="CHEBI:30616"/>
    </ligand>
</feature>
<feature type="binding site" evidence="1">
    <location>
        <position position="175"/>
    </location>
    <ligand>
        <name>ATP</name>
        <dbReference type="ChEBI" id="CHEBI:30616"/>
    </ligand>
</feature>
<protein>
    <recommendedName>
        <fullName evidence="1">tRNA(Met) cytidine acetate ligase</fullName>
        <ecNumber evidence="1">6.3.4.-</ecNumber>
    </recommendedName>
</protein>
<sequence>MQAVGLITEYNPLHNGHRYHLRQAQQLTNADCVIVVMSGDWLQRGEPAILDKWTRAKLALENGADLVIELPVFFATQPAHLFARGGIELLSALDCTSVVFGAEHPELDFQRLATAIAARQGSFTHYNATFATQFNAALQAATGVTLTAANDMLSFCYYAANQTLAHPMQLLPIKRRQADHATTTIAADSRYASGTAVRQAALAQDWAALKPVVPADTFTALTTQRLQRWSDFWPFLQYQLLTVDVARSGQYDQMAEGLEYRMQAMAQHATTFDDFIHQVKSKRYTYTRLQRVATAALLQLTQAEVQKAQAHNYLRVLGFTPKGQAYLHQVKKQLPLPLYTKINQDLRQHALNLDYRAGRVYQLINGQSQDLYRQPWRLPVTIG</sequence>
<comment type="function">
    <text evidence="1">Catalyzes the formation of N(4)-acetylcytidine (ac(4)C) at the wobble position of elongator tRNA(Met), using acetate and ATP as substrates. First activates an acetate ion to form acetyladenylate (Ac-AMP) and then transfers the acetyl group to tRNA to form ac(4)C34.</text>
</comment>
<comment type="catalytic activity">
    <reaction evidence="1">
        <text>cytidine(34) in elongator tRNA(Met) + acetate + ATP = N(4)-acetylcytidine(34) in elongator tRNA(Met) + AMP + diphosphate</text>
        <dbReference type="Rhea" id="RHEA:58144"/>
        <dbReference type="Rhea" id="RHEA-COMP:10693"/>
        <dbReference type="Rhea" id="RHEA-COMP:10694"/>
        <dbReference type="ChEBI" id="CHEBI:30089"/>
        <dbReference type="ChEBI" id="CHEBI:30616"/>
        <dbReference type="ChEBI" id="CHEBI:33019"/>
        <dbReference type="ChEBI" id="CHEBI:74900"/>
        <dbReference type="ChEBI" id="CHEBI:82748"/>
        <dbReference type="ChEBI" id="CHEBI:456215"/>
    </reaction>
</comment>
<comment type="subcellular location">
    <subcellularLocation>
        <location evidence="1">Cytoplasm</location>
    </subcellularLocation>
</comment>
<comment type="similarity">
    <text evidence="1">Belongs to the TmcAL family.</text>
</comment>
<evidence type="ECO:0000255" key="1">
    <source>
        <dbReference type="HAMAP-Rule" id="MF_01539"/>
    </source>
</evidence>
<dbReference type="EC" id="6.3.4.-" evidence="1"/>
<dbReference type="EMBL" id="AL935263">
    <property type="protein sequence ID" value="CCC78858.1"/>
    <property type="molecule type" value="Genomic_DNA"/>
</dbReference>
<dbReference type="RefSeq" id="WP_011101458.1">
    <property type="nucleotide sequence ID" value="NC_004567.2"/>
</dbReference>
<dbReference type="RefSeq" id="YP_004889372.1">
    <property type="nucleotide sequence ID" value="NC_004567.2"/>
</dbReference>
<dbReference type="SMR" id="Q88WT1"/>
<dbReference type="STRING" id="220668.lp_1534"/>
<dbReference type="EnsemblBacteria" id="CCC78858">
    <property type="protein sequence ID" value="CCC78858"/>
    <property type="gene ID" value="lp_1534"/>
</dbReference>
<dbReference type="KEGG" id="lpl:lp_1534"/>
<dbReference type="PATRIC" id="fig|220668.9.peg.1292"/>
<dbReference type="eggNOG" id="COG1323">
    <property type="taxonomic scope" value="Bacteria"/>
</dbReference>
<dbReference type="HOGENOM" id="CLU_038915_0_2_9"/>
<dbReference type="OrthoDB" id="9769796at2"/>
<dbReference type="PhylomeDB" id="Q88WT1"/>
<dbReference type="Proteomes" id="UP000000432">
    <property type="component" value="Chromosome"/>
</dbReference>
<dbReference type="GO" id="GO:0005737">
    <property type="term" value="C:cytoplasm"/>
    <property type="evidence" value="ECO:0007669"/>
    <property type="project" value="UniProtKB-SubCell"/>
</dbReference>
<dbReference type="GO" id="GO:0005524">
    <property type="term" value="F:ATP binding"/>
    <property type="evidence" value="ECO:0007669"/>
    <property type="project" value="UniProtKB-KW"/>
</dbReference>
<dbReference type="GO" id="GO:0016879">
    <property type="term" value="F:ligase activity, forming carbon-nitrogen bonds"/>
    <property type="evidence" value="ECO:0007669"/>
    <property type="project" value="UniProtKB-UniRule"/>
</dbReference>
<dbReference type="GO" id="GO:0000049">
    <property type="term" value="F:tRNA binding"/>
    <property type="evidence" value="ECO:0007669"/>
    <property type="project" value="UniProtKB-KW"/>
</dbReference>
<dbReference type="GO" id="GO:0006400">
    <property type="term" value="P:tRNA modification"/>
    <property type="evidence" value="ECO:0007669"/>
    <property type="project" value="UniProtKB-UniRule"/>
</dbReference>
<dbReference type="Gene3D" id="3.40.50.620">
    <property type="entry name" value="HUPs"/>
    <property type="match status" value="1"/>
</dbReference>
<dbReference type="HAMAP" id="MF_01539">
    <property type="entry name" value="TmcAL"/>
    <property type="match status" value="1"/>
</dbReference>
<dbReference type="InterPro" id="IPR014729">
    <property type="entry name" value="Rossmann-like_a/b/a_fold"/>
</dbReference>
<dbReference type="InterPro" id="IPR008513">
    <property type="entry name" value="tRNA(Met)_cyd_acetate_ligase"/>
</dbReference>
<dbReference type="NCBIfam" id="NF010191">
    <property type="entry name" value="PRK13670.1"/>
    <property type="match status" value="1"/>
</dbReference>
<dbReference type="PANTHER" id="PTHR37825">
    <property type="entry name" value="TRNA(MET) CYTIDINE ACETATE LIGASE"/>
    <property type="match status" value="1"/>
</dbReference>
<dbReference type="PANTHER" id="PTHR37825:SF1">
    <property type="entry name" value="TRNA(MET) CYTIDINE ACETATE LIGASE"/>
    <property type="match status" value="1"/>
</dbReference>
<dbReference type="Pfam" id="PF05636">
    <property type="entry name" value="HIGH_NTase1"/>
    <property type="match status" value="1"/>
</dbReference>
<dbReference type="SUPFAM" id="SSF52374">
    <property type="entry name" value="Nucleotidylyl transferase"/>
    <property type="match status" value="1"/>
</dbReference>
<organism>
    <name type="scientific">Lactiplantibacillus plantarum (strain ATCC BAA-793 / NCIMB 8826 / WCFS1)</name>
    <name type="common">Lactobacillus plantarum</name>
    <dbReference type="NCBI Taxonomy" id="220668"/>
    <lineage>
        <taxon>Bacteria</taxon>
        <taxon>Bacillati</taxon>
        <taxon>Bacillota</taxon>
        <taxon>Bacilli</taxon>
        <taxon>Lactobacillales</taxon>
        <taxon>Lactobacillaceae</taxon>
        <taxon>Lactiplantibacillus</taxon>
    </lineage>
</organism>
<reference key="1">
    <citation type="journal article" date="2003" name="Proc. Natl. Acad. Sci. U.S.A.">
        <title>Complete genome sequence of Lactobacillus plantarum WCFS1.</title>
        <authorList>
            <person name="Kleerebezem M."/>
            <person name="Boekhorst J."/>
            <person name="van Kranenburg R."/>
            <person name="Molenaar D."/>
            <person name="Kuipers O.P."/>
            <person name="Leer R."/>
            <person name="Tarchini R."/>
            <person name="Peters S.A."/>
            <person name="Sandbrink H.M."/>
            <person name="Fiers M.W.E.J."/>
            <person name="Stiekema W."/>
            <person name="Klein Lankhorst R.M."/>
            <person name="Bron P.A."/>
            <person name="Hoffer S.M."/>
            <person name="Nierop Groot M.N."/>
            <person name="Kerkhoven R."/>
            <person name="De Vries M."/>
            <person name="Ursing B."/>
            <person name="De Vos W.M."/>
            <person name="Siezen R.J."/>
        </authorList>
    </citation>
    <scope>NUCLEOTIDE SEQUENCE [LARGE SCALE GENOMIC DNA]</scope>
    <source>
        <strain>ATCC BAA-793 / NCIMB 8826 / WCFS1</strain>
    </source>
</reference>
<reference key="2">
    <citation type="journal article" date="2012" name="J. Bacteriol.">
        <title>Complete resequencing and reannotation of the Lactobacillus plantarum WCFS1 genome.</title>
        <authorList>
            <person name="Siezen R.J."/>
            <person name="Francke C."/>
            <person name="Renckens B."/>
            <person name="Boekhorst J."/>
            <person name="Wels M."/>
            <person name="Kleerebezem M."/>
            <person name="van Hijum S.A."/>
        </authorList>
    </citation>
    <scope>NUCLEOTIDE SEQUENCE [LARGE SCALE GENOMIC DNA]</scope>
    <scope>GENOME REANNOTATION</scope>
    <source>
        <strain>ATCC BAA-793 / NCIMB 8826 / WCFS1</strain>
    </source>
</reference>
<name>TMCAL_LACPL</name>